<keyword id="KW-0285">Flavoprotein</keyword>
<keyword id="KW-0288">FMN</keyword>
<keyword id="KW-0560">Oxidoreductase</keyword>
<keyword id="KW-0664">Pyridoxine biosynthesis</keyword>
<sequence length="216" mass="25160">MPNRDYHAERREYGFAALRRADLQTDPFHQFSDWMETALEKTQQDATAMSVSTVSADGQPHSRIVLLKTFNSDGFIFYTHYDSDKGQQIDQNAKAALLFFWPELDRQIRIEGSLQKVPRETSEAYFHSRPKDSQLAASISNQSQPVASRDILEAKLQEAMSLPDRNLTCPAHWGGYQLKPCYFEFWQGRPSRLHDRFRYQRLSKNDQAWQITRLNP</sequence>
<name>PDXH1_HYDCU</name>
<evidence type="ECO:0000255" key="1">
    <source>
        <dbReference type="HAMAP-Rule" id="MF_01629"/>
    </source>
</evidence>
<accession>Q31IR4</accession>
<gene>
    <name evidence="1" type="primary">pdxH1</name>
    <name type="ordered locus">Tcr_0363</name>
</gene>
<comment type="function">
    <text evidence="1">Catalyzes the oxidation of either pyridoxine 5'-phosphate (PNP) or pyridoxamine 5'-phosphate (PMP) into pyridoxal 5'-phosphate (PLP).</text>
</comment>
<comment type="catalytic activity">
    <reaction evidence="1">
        <text>pyridoxamine 5'-phosphate + O2 + H2O = pyridoxal 5'-phosphate + H2O2 + NH4(+)</text>
        <dbReference type="Rhea" id="RHEA:15817"/>
        <dbReference type="ChEBI" id="CHEBI:15377"/>
        <dbReference type="ChEBI" id="CHEBI:15379"/>
        <dbReference type="ChEBI" id="CHEBI:16240"/>
        <dbReference type="ChEBI" id="CHEBI:28938"/>
        <dbReference type="ChEBI" id="CHEBI:58451"/>
        <dbReference type="ChEBI" id="CHEBI:597326"/>
        <dbReference type="EC" id="1.4.3.5"/>
    </reaction>
</comment>
<comment type="catalytic activity">
    <reaction evidence="1">
        <text>pyridoxine 5'-phosphate + O2 = pyridoxal 5'-phosphate + H2O2</text>
        <dbReference type="Rhea" id="RHEA:15149"/>
        <dbReference type="ChEBI" id="CHEBI:15379"/>
        <dbReference type="ChEBI" id="CHEBI:16240"/>
        <dbReference type="ChEBI" id="CHEBI:58589"/>
        <dbReference type="ChEBI" id="CHEBI:597326"/>
        <dbReference type="EC" id="1.4.3.5"/>
    </reaction>
</comment>
<comment type="cofactor">
    <cofactor evidence="1">
        <name>FMN</name>
        <dbReference type="ChEBI" id="CHEBI:58210"/>
    </cofactor>
    <text evidence="1">Binds 1 FMN per subunit.</text>
</comment>
<comment type="pathway">
    <text evidence="1">Cofactor metabolism; pyridoxal 5'-phosphate salvage; pyridoxal 5'-phosphate from pyridoxamine 5'-phosphate: step 1/1.</text>
</comment>
<comment type="pathway">
    <text evidence="1">Cofactor metabolism; pyridoxal 5'-phosphate salvage; pyridoxal 5'-phosphate from pyridoxine 5'-phosphate: step 1/1.</text>
</comment>
<comment type="subunit">
    <text evidence="1">Homodimer.</text>
</comment>
<comment type="similarity">
    <text evidence="1">Belongs to the pyridoxamine 5'-phosphate oxidase family.</text>
</comment>
<organism>
    <name type="scientific">Hydrogenovibrio crunogenus (strain DSM 25203 / XCL-2)</name>
    <name type="common">Thiomicrospira crunogena</name>
    <dbReference type="NCBI Taxonomy" id="317025"/>
    <lineage>
        <taxon>Bacteria</taxon>
        <taxon>Pseudomonadati</taxon>
        <taxon>Pseudomonadota</taxon>
        <taxon>Gammaproteobacteria</taxon>
        <taxon>Thiotrichales</taxon>
        <taxon>Piscirickettsiaceae</taxon>
        <taxon>Hydrogenovibrio</taxon>
    </lineage>
</organism>
<feature type="chain" id="PRO_0000255894" description="Pyridoxine/pyridoxamine 5'-phosphate oxidase 1">
    <location>
        <begin position="1"/>
        <end position="216"/>
    </location>
</feature>
<feature type="binding site" evidence="1">
    <location>
        <begin position="10"/>
        <end position="13"/>
    </location>
    <ligand>
        <name>substrate</name>
    </ligand>
</feature>
<feature type="binding site" evidence="1">
    <location>
        <begin position="63"/>
        <end position="68"/>
    </location>
    <ligand>
        <name>FMN</name>
        <dbReference type="ChEBI" id="CHEBI:58210"/>
    </ligand>
</feature>
<feature type="binding site" evidence="1">
    <location>
        <position position="68"/>
    </location>
    <ligand>
        <name>substrate</name>
    </ligand>
</feature>
<feature type="binding site" evidence="1">
    <location>
        <begin position="78"/>
        <end position="79"/>
    </location>
    <ligand>
        <name>FMN</name>
        <dbReference type="ChEBI" id="CHEBI:58210"/>
    </ligand>
</feature>
<feature type="binding site" evidence="1">
    <location>
        <position position="85"/>
    </location>
    <ligand>
        <name>FMN</name>
        <dbReference type="ChEBI" id="CHEBI:58210"/>
    </ligand>
</feature>
<feature type="binding site" evidence="1">
    <location>
        <position position="107"/>
    </location>
    <ligand>
        <name>FMN</name>
        <dbReference type="ChEBI" id="CHEBI:58210"/>
    </ligand>
</feature>
<feature type="binding site" evidence="1">
    <location>
        <position position="125"/>
    </location>
    <ligand>
        <name>substrate</name>
    </ligand>
</feature>
<feature type="binding site" evidence="1">
    <location>
        <position position="129"/>
    </location>
    <ligand>
        <name>substrate</name>
    </ligand>
</feature>
<feature type="binding site" evidence="1">
    <location>
        <position position="133"/>
    </location>
    <ligand>
        <name>substrate</name>
    </ligand>
</feature>
<feature type="binding site" evidence="1">
    <location>
        <begin position="142"/>
        <end position="143"/>
    </location>
    <ligand>
        <name>FMN</name>
        <dbReference type="ChEBI" id="CHEBI:58210"/>
    </ligand>
</feature>
<feature type="binding site" evidence="1">
    <location>
        <position position="186"/>
    </location>
    <ligand>
        <name>FMN</name>
        <dbReference type="ChEBI" id="CHEBI:58210"/>
    </ligand>
</feature>
<feature type="binding site" evidence="1">
    <location>
        <begin position="192"/>
        <end position="194"/>
    </location>
    <ligand>
        <name>substrate</name>
    </ligand>
</feature>
<feature type="binding site" evidence="1">
    <location>
        <position position="196"/>
    </location>
    <ligand>
        <name>FMN</name>
        <dbReference type="ChEBI" id="CHEBI:58210"/>
    </ligand>
</feature>
<proteinExistence type="inferred from homology"/>
<protein>
    <recommendedName>
        <fullName evidence="1">Pyridoxine/pyridoxamine 5'-phosphate oxidase 1</fullName>
        <ecNumber evidence="1">1.4.3.5</ecNumber>
    </recommendedName>
    <alternativeName>
        <fullName evidence="1">PNP/PMP oxidase 1</fullName>
        <shortName evidence="1">PNPOx 1</shortName>
    </alternativeName>
    <alternativeName>
        <fullName evidence="1">Pyridoxal 5'-phosphate synthase 1</fullName>
    </alternativeName>
</protein>
<reference key="1">
    <citation type="journal article" date="2006" name="PLoS Biol.">
        <title>The genome of deep-sea vent chemolithoautotroph Thiomicrospira crunogena XCL-2.</title>
        <authorList>
            <person name="Scott K.M."/>
            <person name="Sievert S.M."/>
            <person name="Abril F.N."/>
            <person name="Ball L.A."/>
            <person name="Barrett C.J."/>
            <person name="Blake R.A."/>
            <person name="Boller A.J."/>
            <person name="Chain P.S.G."/>
            <person name="Clark J.A."/>
            <person name="Davis C.R."/>
            <person name="Detter C."/>
            <person name="Do K.F."/>
            <person name="Dobrinski K.P."/>
            <person name="Faza B.I."/>
            <person name="Fitzpatrick K.A."/>
            <person name="Freyermuth S.K."/>
            <person name="Harmer T.L."/>
            <person name="Hauser L.J."/>
            <person name="Huegler M."/>
            <person name="Kerfeld C.A."/>
            <person name="Klotz M.G."/>
            <person name="Kong W.W."/>
            <person name="Land M."/>
            <person name="Lapidus A."/>
            <person name="Larimer F.W."/>
            <person name="Longo D.L."/>
            <person name="Lucas S."/>
            <person name="Malfatti S.A."/>
            <person name="Massey S.E."/>
            <person name="Martin D.D."/>
            <person name="McCuddin Z."/>
            <person name="Meyer F."/>
            <person name="Moore J.L."/>
            <person name="Ocampo L.H. Jr."/>
            <person name="Paul J.H."/>
            <person name="Paulsen I.T."/>
            <person name="Reep D.K."/>
            <person name="Ren Q."/>
            <person name="Ross R.L."/>
            <person name="Sato P.Y."/>
            <person name="Thomas P."/>
            <person name="Tinkham L.E."/>
            <person name="Zeruth G.T."/>
        </authorList>
    </citation>
    <scope>NUCLEOTIDE SEQUENCE [LARGE SCALE GENOMIC DNA]</scope>
    <source>
        <strain>DSM 25203 / XCL-2</strain>
    </source>
</reference>
<dbReference type="EC" id="1.4.3.5" evidence="1"/>
<dbReference type="EMBL" id="CP000109">
    <property type="protein sequence ID" value="ABB40959.1"/>
    <property type="molecule type" value="Genomic_DNA"/>
</dbReference>
<dbReference type="SMR" id="Q31IR4"/>
<dbReference type="STRING" id="317025.Tcr_0363"/>
<dbReference type="KEGG" id="tcx:Tcr_0363"/>
<dbReference type="eggNOG" id="COG0259">
    <property type="taxonomic scope" value="Bacteria"/>
</dbReference>
<dbReference type="HOGENOM" id="CLU_032263_2_2_6"/>
<dbReference type="OrthoDB" id="9780392at2"/>
<dbReference type="UniPathway" id="UPA01068">
    <property type="reaction ID" value="UER00304"/>
</dbReference>
<dbReference type="UniPathway" id="UPA01068">
    <property type="reaction ID" value="UER00305"/>
</dbReference>
<dbReference type="GO" id="GO:0010181">
    <property type="term" value="F:FMN binding"/>
    <property type="evidence" value="ECO:0007669"/>
    <property type="project" value="UniProtKB-UniRule"/>
</dbReference>
<dbReference type="GO" id="GO:0004733">
    <property type="term" value="F:pyridoxamine phosphate oxidase activity"/>
    <property type="evidence" value="ECO:0007669"/>
    <property type="project" value="UniProtKB-UniRule"/>
</dbReference>
<dbReference type="GO" id="GO:0008615">
    <property type="term" value="P:pyridoxine biosynthetic process"/>
    <property type="evidence" value="ECO:0007669"/>
    <property type="project" value="UniProtKB-KW"/>
</dbReference>
<dbReference type="Gene3D" id="2.30.110.10">
    <property type="entry name" value="Electron Transport, Fmn-binding Protein, Chain A"/>
    <property type="match status" value="1"/>
</dbReference>
<dbReference type="HAMAP" id="MF_01629">
    <property type="entry name" value="PdxH"/>
    <property type="match status" value="1"/>
</dbReference>
<dbReference type="InterPro" id="IPR000659">
    <property type="entry name" value="Pyridox_Oxase"/>
</dbReference>
<dbReference type="InterPro" id="IPR019740">
    <property type="entry name" value="Pyridox_Oxase_CS"/>
</dbReference>
<dbReference type="InterPro" id="IPR011576">
    <property type="entry name" value="Pyridox_Oxase_N"/>
</dbReference>
<dbReference type="InterPro" id="IPR019576">
    <property type="entry name" value="Pyridoxamine_oxidase_dimer_C"/>
</dbReference>
<dbReference type="InterPro" id="IPR012349">
    <property type="entry name" value="Split_barrel_FMN-bd"/>
</dbReference>
<dbReference type="NCBIfam" id="TIGR00558">
    <property type="entry name" value="pdxH"/>
    <property type="match status" value="1"/>
</dbReference>
<dbReference type="NCBIfam" id="NF004231">
    <property type="entry name" value="PRK05679.1"/>
    <property type="match status" value="1"/>
</dbReference>
<dbReference type="PANTHER" id="PTHR10851:SF0">
    <property type="entry name" value="PYRIDOXINE-5'-PHOSPHATE OXIDASE"/>
    <property type="match status" value="1"/>
</dbReference>
<dbReference type="PANTHER" id="PTHR10851">
    <property type="entry name" value="PYRIDOXINE-5-PHOSPHATE OXIDASE"/>
    <property type="match status" value="1"/>
</dbReference>
<dbReference type="Pfam" id="PF10590">
    <property type="entry name" value="PNP_phzG_C"/>
    <property type="match status" value="1"/>
</dbReference>
<dbReference type="Pfam" id="PF01243">
    <property type="entry name" value="PNPOx_N"/>
    <property type="match status" value="1"/>
</dbReference>
<dbReference type="PIRSF" id="PIRSF000190">
    <property type="entry name" value="Pyd_amn-ph_oxd"/>
    <property type="match status" value="1"/>
</dbReference>
<dbReference type="SUPFAM" id="SSF50475">
    <property type="entry name" value="FMN-binding split barrel"/>
    <property type="match status" value="1"/>
</dbReference>
<dbReference type="PROSITE" id="PS01064">
    <property type="entry name" value="PYRIDOX_OXIDASE"/>
    <property type="match status" value="1"/>
</dbReference>